<keyword id="KW-0010">Activator</keyword>
<keyword id="KW-0539">Nucleus</keyword>
<keyword id="KW-1185">Reference proteome</keyword>
<keyword id="KW-0678">Repressor</keyword>
<keyword id="KW-0804">Transcription</keyword>
<keyword id="KW-0805">Transcription regulation</keyword>
<sequence length="1591" mass="175528">MIPHSSAGVQPWGHPLRAVHSASGLTDIPHALGQPDLHPEQSSMPAPQPQTGPSAVIDLTANGGEAQEREHPAKRLRLDIHSGSNARDGSPASAGLGEPKSTPVSTSSKPPPLSWRGRPVWSFQALLSEVPGAGEPNVESTTAAAQDVKPLSPPSFPAPPWKHSPADPTASSAAGLRGVTPAKEVRTTPYHIEVPSVAPVLRGDKVADFLPWTGNHPEDVLNEQTAKQGYYDRTQVSQNESNTARPSLYAQLKHRSGLQMLSSVFAAALEKRQGHSMVTAPSTFKPPPRVTLTDNKREAWLRDLANPTVPLRRLSRTIPHGIRGRVLLDQCLTKWVPVGRAVWLAKCVGANEIRAFKRKGTSGALAIGLEAKWVRDWTTNVQQFLDGVITSCGVADWKLKMTYAVSLTARLFFEQLLDHDQYLGWFLSSLEAAPLNTLPVWLLMLGIYWNHLLRYRKRGRRLAELLLEKLSKANKLDSSNTLRPLADRLSLHIRKLTLEHTSSAVLPHSWDKYKDLLSSCLNMKDSVHRAVIQNLSERNARVQRPRKCQETANQPPQQRVIQLFDSIRSTHDVTAVSIASLSAIDDKAALVFKLLEWVSTPFRHGICRVYTGARLLRKWKVAGVDVDSCIISFLAEGHDGSHLNMDNIYHIISELVRSQTFSVGRYLQWLMAKGVADCSKDSHQHHKHLSDDLELLLQLPVSRLPDHVRNLRNTLLHRAGIEVSKEEAMIATLKASIAQRLPNIFSSVTDSAMSCDVAQSELTWAVKSEIGQWIRRGVTEGRRGSTGKFQIAIGQPVLSADEFYSIRDILEGFGDLSMLADVLNQATNCDDGLILASAADTVNYHFQSFSVIGASTGLFRRFVESYARLKRLGVTSLDLILSLIDLGLHLPGEFNTVALLRQDLGRIENKSSMAAPSPLSDHIPATFNETDSLFPEKLDQLLFSGGGMDESTMDAIFNALITSLGRAEDRVKLSANDICRYLAYLRPFHPKHFDIMLIRWICGLLKSSTRTMLSRVLPPLIGVGCVTIQAFIFLVRRLLQSEKVASMIPHPNDLKIDLLQLLVPPPAGQSRYFDMVTYRFHLSQKEFLSKHPEETFNIIRDAIALIDSQDQDNHSDQGQMNLNQNAMVLLQILLTKNPESAVQYCTEKLITQHSTSMMVLTKALDTLLGFDTGPDPPNVSVAEKVIELTNDFSLPFCQLKLQTLFNAEAGSNVKNEIVDVMFKAAIADSRSRRSNWVGLVRLMNQDAVRQIRERAEKSFFAIPLFEEANEGRSMNNGTSLETAKLYLTIIEKLAYSIPDSGVQGVGSVLVEKMDLLLHKLVSMQTSYNGSTEMRHGIDAEQVIQSRTEFERSLAFWFSALLRMIVLHRSAFSIPPAPKSSASQEQTRLLISIFCITLARLPDSVLRLFPTADYFPHSMRQGDHRPCPGILLQTHALDVAASLIDMFPDELRHQCARFLKDKCSPFAQSQNDSRFLYLLGPLGDGPTSNATLPVSIPSPAASGSTPAPTPSGSLTAGPSNPPQPASASLGVPTGLPEGLNCGASHLCLQYRGRAIGAYPVRPWELLEDAAPIAGTNDTAVSLGYFDARRVRA</sequence>
<evidence type="ECO:0000250" key="1"/>
<evidence type="ECO:0000256" key="2">
    <source>
        <dbReference type="SAM" id="MobiDB-lite"/>
    </source>
</evidence>
<evidence type="ECO:0000305" key="3"/>
<proteinExistence type="inferred from homology"/>
<protein>
    <recommendedName>
        <fullName>Mediator of RNA polymerase II transcription subunit 12</fullName>
    </recommendedName>
    <alternativeName>
        <fullName>Mediator complex subunit 12</fullName>
    </alternativeName>
</protein>
<comment type="function">
    <text evidence="1">Component of the srb8-11 complex. The srb8-11 complex is a regulatory module of the Mediator complex which is itself involved in regulation of basal and activated RNA polymerase II-dependent transcription. The srb8-11 complex may be involved in the transcriptional repression of a subset of genes regulated by Mediator. It may inhibit the association of the Mediator complex with RNA polymerase II to form the holoenzyme complex (By similarity).</text>
</comment>
<comment type="subunit">
    <text evidence="1">Component of the srb8-11 complex, which itself associates with the Mediator complex.</text>
</comment>
<comment type="subcellular location">
    <subcellularLocation>
        <location evidence="3">Nucleus</location>
    </subcellularLocation>
</comment>
<comment type="similarity">
    <text evidence="3">Belongs to the Mediator complex subunit 12 family.</text>
</comment>
<accession>A1CJ92</accession>
<name>SRB8_ASPCL</name>
<gene>
    <name type="primary">srb8</name>
    <name type="synonym">med12</name>
    <name type="ORF">ACLA_034190</name>
</gene>
<organism>
    <name type="scientific">Aspergillus clavatus (strain ATCC 1007 / CBS 513.65 / DSM 816 / NCTC 3887 / NRRL 1 / QM 1276 / 107)</name>
    <dbReference type="NCBI Taxonomy" id="344612"/>
    <lineage>
        <taxon>Eukaryota</taxon>
        <taxon>Fungi</taxon>
        <taxon>Dikarya</taxon>
        <taxon>Ascomycota</taxon>
        <taxon>Pezizomycotina</taxon>
        <taxon>Eurotiomycetes</taxon>
        <taxon>Eurotiomycetidae</taxon>
        <taxon>Eurotiales</taxon>
        <taxon>Aspergillaceae</taxon>
        <taxon>Aspergillus</taxon>
        <taxon>Aspergillus subgen. Fumigati</taxon>
    </lineage>
</organism>
<reference key="1">
    <citation type="journal article" date="2008" name="PLoS Genet.">
        <title>Genomic islands in the pathogenic filamentous fungus Aspergillus fumigatus.</title>
        <authorList>
            <person name="Fedorova N.D."/>
            <person name="Khaldi N."/>
            <person name="Joardar V.S."/>
            <person name="Maiti R."/>
            <person name="Amedeo P."/>
            <person name="Anderson M.J."/>
            <person name="Crabtree J."/>
            <person name="Silva J.C."/>
            <person name="Badger J.H."/>
            <person name="Albarraq A."/>
            <person name="Angiuoli S."/>
            <person name="Bussey H."/>
            <person name="Bowyer P."/>
            <person name="Cotty P.J."/>
            <person name="Dyer P.S."/>
            <person name="Egan A."/>
            <person name="Galens K."/>
            <person name="Fraser-Liggett C.M."/>
            <person name="Haas B.J."/>
            <person name="Inman J.M."/>
            <person name="Kent R."/>
            <person name="Lemieux S."/>
            <person name="Malavazi I."/>
            <person name="Orvis J."/>
            <person name="Roemer T."/>
            <person name="Ronning C.M."/>
            <person name="Sundaram J.P."/>
            <person name="Sutton G."/>
            <person name="Turner G."/>
            <person name="Venter J.C."/>
            <person name="White O.R."/>
            <person name="Whitty B.R."/>
            <person name="Youngman P."/>
            <person name="Wolfe K.H."/>
            <person name="Goldman G.H."/>
            <person name="Wortman J.R."/>
            <person name="Jiang B."/>
            <person name="Denning D.W."/>
            <person name="Nierman W.C."/>
        </authorList>
    </citation>
    <scope>NUCLEOTIDE SEQUENCE [LARGE SCALE GENOMIC DNA]</scope>
    <source>
        <strain>ATCC 1007 / CBS 513.65 / DSM 816 / NCTC 3887 / NRRL 1 / QM 1276 / 107</strain>
    </source>
</reference>
<dbReference type="EMBL" id="DS027056">
    <property type="protein sequence ID" value="EAW09216.1"/>
    <property type="molecule type" value="Genomic_DNA"/>
</dbReference>
<dbReference type="RefSeq" id="XP_001270642.1">
    <property type="nucleotide sequence ID" value="XM_001270641.1"/>
</dbReference>
<dbReference type="STRING" id="344612.A1CJ92"/>
<dbReference type="EnsemblFungi" id="EAW09216">
    <property type="protein sequence ID" value="EAW09216"/>
    <property type="gene ID" value="ACLA_034190"/>
</dbReference>
<dbReference type="GeneID" id="4702894"/>
<dbReference type="KEGG" id="act:ACLA_034190"/>
<dbReference type="VEuPathDB" id="FungiDB:ACLA_034190"/>
<dbReference type="eggNOG" id="KOG4522">
    <property type="taxonomic scope" value="Eukaryota"/>
</dbReference>
<dbReference type="HOGENOM" id="CLU_002034_1_0_1"/>
<dbReference type="OMA" id="YPVRPWE"/>
<dbReference type="OrthoDB" id="20828at2759"/>
<dbReference type="Proteomes" id="UP000006701">
    <property type="component" value="Unassembled WGS sequence"/>
</dbReference>
<dbReference type="GO" id="GO:0016592">
    <property type="term" value="C:mediator complex"/>
    <property type="evidence" value="ECO:0007669"/>
    <property type="project" value="InterPro"/>
</dbReference>
<dbReference type="GO" id="GO:0003712">
    <property type="term" value="F:transcription coregulator activity"/>
    <property type="evidence" value="ECO:0007669"/>
    <property type="project" value="InterPro"/>
</dbReference>
<dbReference type="GO" id="GO:0006357">
    <property type="term" value="P:regulation of transcription by RNA polymerase II"/>
    <property type="evidence" value="ECO:0007669"/>
    <property type="project" value="InterPro"/>
</dbReference>
<dbReference type="InterPro" id="IPR019035">
    <property type="entry name" value="Mediator_Med12"/>
</dbReference>
<dbReference type="PANTHER" id="PTHR46567">
    <property type="entry name" value="MEDIATOR OF RNA POLYMERASE II TRANSCRIPTION SUBUNIT 12"/>
    <property type="match status" value="1"/>
</dbReference>
<dbReference type="PANTHER" id="PTHR46567:SF1">
    <property type="entry name" value="MEDIATOR OF RNA POLYMERASE II TRANSCRIPTION SUBUNIT 12"/>
    <property type="match status" value="1"/>
</dbReference>
<dbReference type="Pfam" id="PF25326">
    <property type="entry name" value="ARM_SRB8"/>
    <property type="match status" value="1"/>
</dbReference>
<dbReference type="Pfam" id="PF09497">
    <property type="entry name" value="Med12"/>
    <property type="match status" value="1"/>
</dbReference>
<dbReference type="SMART" id="SM01281">
    <property type="entry name" value="Med12"/>
    <property type="match status" value="1"/>
</dbReference>
<feature type="chain" id="PRO_0000312965" description="Mediator of RNA polymerase II transcription subunit 12">
    <location>
        <begin position="1"/>
        <end position="1591"/>
    </location>
</feature>
<feature type="region of interest" description="Disordered" evidence="2">
    <location>
        <begin position="1"/>
        <end position="116"/>
    </location>
</feature>
<feature type="region of interest" description="Disordered" evidence="2">
    <location>
        <begin position="132"/>
        <end position="176"/>
    </location>
</feature>
<feature type="region of interest" description="Disordered" evidence="2">
    <location>
        <begin position="1488"/>
        <end position="1530"/>
    </location>
</feature>
<feature type="compositionally biased region" description="Polar residues" evidence="2">
    <location>
        <begin position="40"/>
        <end position="53"/>
    </location>
</feature>
<feature type="compositionally biased region" description="Basic and acidic residues" evidence="2">
    <location>
        <begin position="66"/>
        <end position="80"/>
    </location>
</feature>
<feature type="compositionally biased region" description="Low complexity" evidence="2">
    <location>
        <begin position="99"/>
        <end position="108"/>
    </location>
</feature>
<feature type="compositionally biased region" description="Pro residues" evidence="2">
    <location>
        <begin position="151"/>
        <end position="162"/>
    </location>
</feature>
<feature type="compositionally biased region" description="Low complexity" evidence="2">
    <location>
        <begin position="1496"/>
        <end position="1512"/>
    </location>
</feature>